<reference key="1">
    <citation type="journal article" date="2007" name="Genes Dev.">
        <title>New insights into Acinetobacter baumannii pathogenesis revealed by high-density pyrosequencing and transposon mutagenesis.</title>
        <authorList>
            <person name="Smith M.G."/>
            <person name="Gianoulis T.A."/>
            <person name="Pukatzki S."/>
            <person name="Mekalanos J.J."/>
            <person name="Ornston L.N."/>
            <person name="Gerstein M."/>
            <person name="Snyder M."/>
        </authorList>
    </citation>
    <scope>NUCLEOTIDE SEQUENCE [LARGE SCALE GENOMIC DNA]</scope>
    <source>
        <strain>ATCC 17978 / DSM 105126 / CIP 53.77 / LMG 1025 / NCDC KC755 / 5377</strain>
    </source>
</reference>
<gene>
    <name evidence="1" type="primary">dut</name>
    <name type="ordered locus">A1S_0886</name>
</gene>
<feature type="chain" id="PRO_1000094937" description="Deoxyuridine 5'-triphosphate nucleotidohydrolase">
    <location>
        <begin position="1"/>
        <end position="150"/>
    </location>
</feature>
<feature type="binding site" evidence="1">
    <location>
        <begin position="69"/>
        <end position="71"/>
    </location>
    <ligand>
        <name>substrate</name>
    </ligand>
</feature>
<feature type="binding site" evidence="1">
    <location>
        <position position="82"/>
    </location>
    <ligand>
        <name>substrate</name>
    </ligand>
</feature>
<feature type="binding site" evidence="1">
    <location>
        <begin position="86"/>
        <end position="88"/>
    </location>
    <ligand>
        <name>substrate</name>
    </ligand>
</feature>
<feature type="binding site" evidence="1">
    <location>
        <position position="96"/>
    </location>
    <ligand>
        <name>substrate</name>
    </ligand>
</feature>
<comment type="function">
    <text evidence="1">This enzyme is involved in nucleotide metabolism: it produces dUMP, the immediate precursor of thymidine nucleotides and it decreases the intracellular concentration of dUTP so that uracil cannot be incorporated into DNA.</text>
</comment>
<comment type="catalytic activity">
    <reaction evidence="1">
        <text>dUTP + H2O = dUMP + diphosphate + H(+)</text>
        <dbReference type="Rhea" id="RHEA:10248"/>
        <dbReference type="ChEBI" id="CHEBI:15377"/>
        <dbReference type="ChEBI" id="CHEBI:15378"/>
        <dbReference type="ChEBI" id="CHEBI:33019"/>
        <dbReference type="ChEBI" id="CHEBI:61555"/>
        <dbReference type="ChEBI" id="CHEBI:246422"/>
        <dbReference type="EC" id="3.6.1.23"/>
    </reaction>
</comment>
<comment type="cofactor">
    <cofactor evidence="1">
        <name>Mg(2+)</name>
        <dbReference type="ChEBI" id="CHEBI:18420"/>
    </cofactor>
</comment>
<comment type="pathway">
    <text evidence="1">Pyrimidine metabolism; dUMP biosynthesis; dUMP from dCTP (dUTP route): step 2/2.</text>
</comment>
<comment type="similarity">
    <text evidence="1">Belongs to the dUTPase family.</text>
</comment>
<accession>A3M324</accession>
<protein>
    <recommendedName>
        <fullName evidence="1">Deoxyuridine 5'-triphosphate nucleotidohydrolase</fullName>
        <shortName evidence="1">dUTPase</shortName>
        <ecNumber evidence="1">3.6.1.23</ecNumber>
    </recommendedName>
    <alternativeName>
        <fullName evidence="1">dUTP pyrophosphatase</fullName>
    </alternativeName>
</protein>
<organism>
    <name type="scientific">Acinetobacter baumannii (strain ATCC 17978 / DSM 105126 / CIP 53.77 / LMG 1025 / NCDC KC755 / 5377)</name>
    <dbReference type="NCBI Taxonomy" id="400667"/>
    <lineage>
        <taxon>Bacteria</taxon>
        <taxon>Pseudomonadati</taxon>
        <taxon>Pseudomonadota</taxon>
        <taxon>Gammaproteobacteria</taxon>
        <taxon>Moraxellales</taxon>
        <taxon>Moraxellaceae</taxon>
        <taxon>Acinetobacter</taxon>
        <taxon>Acinetobacter calcoaceticus/baumannii complex</taxon>
    </lineage>
</organism>
<dbReference type="EC" id="3.6.1.23" evidence="1"/>
<dbReference type="EMBL" id="CP000521">
    <property type="protein sequence ID" value="ABO11318.2"/>
    <property type="molecule type" value="Genomic_DNA"/>
</dbReference>
<dbReference type="RefSeq" id="WP_000868152.1">
    <property type="nucleotide sequence ID" value="NZ_CP053098.1"/>
</dbReference>
<dbReference type="SMR" id="A3M324"/>
<dbReference type="GeneID" id="92892815"/>
<dbReference type="KEGG" id="acb:A1S_0886"/>
<dbReference type="HOGENOM" id="CLU_068508_1_1_6"/>
<dbReference type="UniPathway" id="UPA00610">
    <property type="reaction ID" value="UER00666"/>
</dbReference>
<dbReference type="GO" id="GO:0004170">
    <property type="term" value="F:dUTP diphosphatase activity"/>
    <property type="evidence" value="ECO:0007669"/>
    <property type="project" value="UniProtKB-UniRule"/>
</dbReference>
<dbReference type="GO" id="GO:0000287">
    <property type="term" value="F:magnesium ion binding"/>
    <property type="evidence" value="ECO:0007669"/>
    <property type="project" value="UniProtKB-UniRule"/>
</dbReference>
<dbReference type="GO" id="GO:0006226">
    <property type="term" value="P:dUMP biosynthetic process"/>
    <property type="evidence" value="ECO:0007669"/>
    <property type="project" value="UniProtKB-UniRule"/>
</dbReference>
<dbReference type="GO" id="GO:0046081">
    <property type="term" value="P:dUTP catabolic process"/>
    <property type="evidence" value="ECO:0007669"/>
    <property type="project" value="InterPro"/>
</dbReference>
<dbReference type="CDD" id="cd07557">
    <property type="entry name" value="trimeric_dUTPase"/>
    <property type="match status" value="1"/>
</dbReference>
<dbReference type="FunFam" id="2.70.40.10:FF:000002">
    <property type="entry name" value="dUTP diphosphatase"/>
    <property type="match status" value="1"/>
</dbReference>
<dbReference type="Gene3D" id="2.70.40.10">
    <property type="match status" value="1"/>
</dbReference>
<dbReference type="HAMAP" id="MF_00116">
    <property type="entry name" value="dUTPase_bact"/>
    <property type="match status" value="1"/>
</dbReference>
<dbReference type="InterPro" id="IPR008181">
    <property type="entry name" value="dUTPase"/>
</dbReference>
<dbReference type="InterPro" id="IPR029054">
    <property type="entry name" value="dUTPase-like"/>
</dbReference>
<dbReference type="InterPro" id="IPR036157">
    <property type="entry name" value="dUTPase-like_sf"/>
</dbReference>
<dbReference type="InterPro" id="IPR033704">
    <property type="entry name" value="dUTPase_trimeric"/>
</dbReference>
<dbReference type="NCBIfam" id="TIGR00576">
    <property type="entry name" value="dut"/>
    <property type="match status" value="1"/>
</dbReference>
<dbReference type="NCBIfam" id="NF001862">
    <property type="entry name" value="PRK00601.1"/>
    <property type="match status" value="1"/>
</dbReference>
<dbReference type="PANTHER" id="PTHR11241">
    <property type="entry name" value="DEOXYURIDINE 5'-TRIPHOSPHATE NUCLEOTIDOHYDROLASE"/>
    <property type="match status" value="1"/>
</dbReference>
<dbReference type="PANTHER" id="PTHR11241:SF0">
    <property type="entry name" value="DEOXYURIDINE 5'-TRIPHOSPHATE NUCLEOTIDOHYDROLASE"/>
    <property type="match status" value="1"/>
</dbReference>
<dbReference type="Pfam" id="PF00692">
    <property type="entry name" value="dUTPase"/>
    <property type="match status" value="1"/>
</dbReference>
<dbReference type="SUPFAM" id="SSF51283">
    <property type="entry name" value="dUTPase-like"/>
    <property type="match status" value="1"/>
</dbReference>
<proteinExistence type="inferred from homology"/>
<sequence>MKVQVKLLDPRLGKEWPLPSYATAGSAGLDLRACLDEAIEIEPGQTVLVKTGMAIYIHDVNFAGLILPRSGLGHKHGIVLGNLVGLIDSDYQGELMVSVWNRGQTTFRLEPGERLAQYVLVPVVQAEFEQVEEFEETLRGAGGFGHTGKQ</sequence>
<keyword id="KW-0378">Hydrolase</keyword>
<keyword id="KW-0460">Magnesium</keyword>
<keyword id="KW-0479">Metal-binding</keyword>
<keyword id="KW-0546">Nucleotide metabolism</keyword>
<evidence type="ECO:0000255" key="1">
    <source>
        <dbReference type="HAMAP-Rule" id="MF_00116"/>
    </source>
</evidence>
<name>DUT_ACIBT</name>